<dbReference type="EC" id="2.1.1.182" evidence="1"/>
<dbReference type="EMBL" id="CP000555">
    <property type="protein sequence ID" value="ABM93166.1"/>
    <property type="molecule type" value="Genomic_DNA"/>
</dbReference>
<dbReference type="RefSeq" id="WP_011827805.1">
    <property type="nucleotide sequence ID" value="NC_008825.1"/>
</dbReference>
<dbReference type="SMR" id="A2SC77"/>
<dbReference type="STRING" id="420662.Mpe_A0204"/>
<dbReference type="KEGG" id="mpt:Mpe_A0204"/>
<dbReference type="eggNOG" id="COG0030">
    <property type="taxonomic scope" value="Bacteria"/>
</dbReference>
<dbReference type="HOGENOM" id="CLU_041220_0_1_4"/>
<dbReference type="Proteomes" id="UP000000366">
    <property type="component" value="Chromosome"/>
</dbReference>
<dbReference type="GO" id="GO:0005829">
    <property type="term" value="C:cytosol"/>
    <property type="evidence" value="ECO:0007669"/>
    <property type="project" value="TreeGrafter"/>
</dbReference>
<dbReference type="GO" id="GO:0052908">
    <property type="term" value="F:16S rRNA (adenine(1518)-N(6)/adenine(1519)-N(6))-dimethyltransferase activity"/>
    <property type="evidence" value="ECO:0007669"/>
    <property type="project" value="UniProtKB-EC"/>
</dbReference>
<dbReference type="GO" id="GO:0003723">
    <property type="term" value="F:RNA binding"/>
    <property type="evidence" value="ECO:0007669"/>
    <property type="project" value="UniProtKB-KW"/>
</dbReference>
<dbReference type="Gene3D" id="1.10.8.100">
    <property type="entry name" value="Ribosomal RNA adenine dimethylase-like, domain 2"/>
    <property type="match status" value="1"/>
</dbReference>
<dbReference type="Gene3D" id="3.40.50.150">
    <property type="entry name" value="Vaccinia Virus protein VP39"/>
    <property type="match status" value="1"/>
</dbReference>
<dbReference type="HAMAP" id="MF_00607">
    <property type="entry name" value="16SrRNA_methyltr_A"/>
    <property type="match status" value="1"/>
</dbReference>
<dbReference type="InterPro" id="IPR001737">
    <property type="entry name" value="KsgA/Erm"/>
</dbReference>
<dbReference type="InterPro" id="IPR023165">
    <property type="entry name" value="rRNA_Ade_diMease-like_C"/>
</dbReference>
<dbReference type="InterPro" id="IPR020596">
    <property type="entry name" value="rRNA_Ade_Mease_Trfase_CS"/>
</dbReference>
<dbReference type="InterPro" id="IPR020598">
    <property type="entry name" value="rRNA_Ade_methylase_Trfase_N"/>
</dbReference>
<dbReference type="InterPro" id="IPR011530">
    <property type="entry name" value="rRNA_adenine_dimethylase"/>
</dbReference>
<dbReference type="InterPro" id="IPR029063">
    <property type="entry name" value="SAM-dependent_MTases_sf"/>
</dbReference>
<dbReference type="NCBIfam" id="TIGR00755">
    <property type="entry name" value="ksgA"/>
    <property type="match status" value="1"/>
</dbReference>
<dbReference type="PANTHER" id="PTHR11727">
    <property type="entry name" value="DIMETHYLADENOSINE TRANSFERASE"/>
    <property type="match status" value="1"/>
</dbReference>
<dbReference type="PANTHER" id="PTHR11727:SF7">
    <property type="entry name" value="DIMETHYLADENOSINE TRANSFERASE-RELATED"/>
    <property type="match status" value="1"/>
</dbReference>
<dbReference type="Pfam" id="PF00398">
    <property type="entry name" value="RrnaAD"/>
    <property type="match status" value="1"/>
</dbReference>
<dbReference type="SMART" id="SM00650">
    <property type="entry name" value="rADc"/>
    <property type="match status" value="1"/>
</dbReference>
<dbReference type="SUPFAM" id="SSF53335">
    <property type="entry name" value="S-adenosyl-L-methionine-dependent methyltransferases"/>
    <property type="match status" value="1"/>
</dbReference>
<dbReference type="PROSITE" id="PS01131">
    <property type="entry name" value="RRNA_A_DIMETH"/>
    <property type="match status" value="1"/>
</dbReference>
<dbReference type="PROSITE" id="PS51689">
    <property type="entry name" value="SAM_RNA_A_N6_MT"/>
    <property type="match status" value="1"/>
</dbReference>
<gene>
    <name evidence="1" type="primary">rsmA</name>
    <name evidence="1" type="synonym">ksgA</name>
    <name type="ordered locus">Mpe_A0204</name>
</gene>
<reference key="1">
    <citation type="journal article" date="2007" name="J. Bacteriol.">
        <title>Whole-genome analysis of the methyl tert-butyl ether-degrading beta-proteobacterium Methylibium petroleiphilum PM1.</title>
        <authorList>
            <person name="Kane S.R."/>
            <person name="Chakicherla A.Y."/>
            <person name="Chain P.S.G."/>
            <person name="Schmidt R."/>
            <person name="Shin M.W."/>
            <person name="Legler T.C."/>
            <person name="Scow K.M."/>
            <person name="Larimer F.W."/>
            <person name="Lucas S.M."/>
            <person name="Richardson P.M."/>
            <person name="Hristova K.R."/>
        </authorList>
    </citation>
    <scope>NUCLEOTIDE SEQUENCE [LARGE SCALE GENOMIC DNA]</scope>
    <source>
        <strain>ATCC BAA-1232 / LMG 22953 / PM1</strain>
    </source>
</reference>
<protein>
    <recommendedName>
        <fullName evidence="1">Ribosomal RNA small subunit methyltransferase A</fullName>
        <ecNumber evidence="1">2.1.1.182</ecNumber>
    </recommendedName>
    <alternativeName>
        <fullName evidence="1">16S rRNA (adenine(1518)-N(6)/adenine(1519)-N(6))-dimethyltransferase</fullName>
    </alternativeName>
    <alternativeName>
        <fullName evidence="1">16S rRNA dimethyladenosine transferase</fullName>
    </alternativeName>
    <alternativeName>
        <fullName evidence="1">16S rRNA dimethylase</fullName>
    </alternativeName>
    <alternativeName>
        <fullName evidence="1">S-adenosylmethionine-6-N', N'-adenosyl(rRNA) dimethyltransferase</fullName>
    </alternativeName>
</protein>
<organism>
    <name type="scientific">Methylibium petroleiphilum (strain ATCC BAA-1232 / LMG 22953 / PM1)</name>
    <dbReference type="NCBI Taxonomy" id="420662"/>
    <lineage>
        <taxon>Bacteria</taxon>
        <taxon>Pseudomonadati</taxon>
        <taxon>Pseudomonadota</taxon>
        <taxon>Betaproteobacteria</taxon>
        <taxon>Burkholderiales</taxon>
        <taxon>Sphaerotilaceae</taxon>
        <taxon>Methylibium</taxon>
    </lineage>
</organism>
<keyword id="KW-0963">Cytoplasm</keyword>
<keyword id="KW-0489">Methyltransferase</keyword>
<keyword id="KW-1185">Reference proteome</keyword>
<keyword id="KW-0694">RNA-binding</keyword>
<keyword id="KW-0698">rRNA processing</keyword>
<keyword id="KW-0949">S-adenosyl-L-methionine</keyword>
<keyword id="KW-0808">Transferase</keyword>
<feature type="chain" id="PRO_1000056637" description="Ribosomal RNA small subunit methyltransferase A">
    <location>
        <begin position="1"/>
        <end position="256"/>
    </location>
</feature>
<feature type="binding site" evidence="1">
    <location>
        <position position="12"/>
    </location>
    <ligand>
        <name>S-adenosyl-L-methionine</name>
        <dbReference type="ChEBI" id="CHEBI:59789"/>
    </ligand>
</feature>
<feature type="binding site" evidence="1">
    <location>
        <position position="14"/>
    </location>
    <ligand>
        <name>S-adenosyl-L-methionine</name>
        <dbReference type="ChEBI" id="CHEBI:59789"/>
    </ligand>
</feature>
<feature type="binding site" evidence="1">
    <location>
        <position position="39"/>
    </location>
    <ligand>
        <name>S-adenosyl-L-methionine</name>
        <dbReference type="ChEBI" id="CHEBI:59789"/>
    </ligand>
</feature>
<feature type="binding site" evidence="1">
    <location>
        <position position="60"/>
    </location>
    <ligand>
        <name>S-adenosyl-L-methionine</name>
        <dbReference type="ChEBI" id="CHEBI:59789"/>
    </ligand>
</feature>
<feature type="binding site" evidence="1">
    <location>
        <position position="81"/>
    </location>
    <ligand>
        <name>S-adenosyl-L-methionine</name>
        <dbReference type="ChEBI" id="CHEBI:59789"/>
    </ligand>
</feature>
<feature type="binding site" evidence="1">
    <location>
        <position position="103"/>
    </location>
    <ligand>
        <name>S-adenosyl-L-methionine</name>
        <dbReference type="ChEBI" id="CHEBI:59789"/>
    </ligand>
</feature>
<sequence>MKHIARKRFGQHFLSDAAVVDAIVGLIDPRPGQALVEIGPGLGAMTDPLVARCEHLTVVELDRDLAARLRRRAELQVIESDVLRVDFAALAMASAGRLRIVGNLPYNISTPILFHLLPAAAQVEDQHFMLQKEVVERMAAAPCSKDYGRLSVMLQWRYDIESVLDVPPEAFEPPPRVNSAVVRMLPFPAPPAVDAALLGELVATAFSQRRKLLRHTLGKWLDAREFSGTFDTQRRAEEVPVADYLALALALTPGER</sequence>
<accession>A2SC77</accession>
<proteinExistence type="inferred from homology"/>
<comment type="function">
    <text evidence="1">Specifically dimethylates two adjacent adenosines (A1518 and A1519) in the loop of a conserved hairpin near the 3'-end of 16S rRNA in the 30S particle. May play a critical role in biogenesis of 30S subunits.</text>
</comment>
<comment type="catalytic activity">
    <reaction evidence="1">
        <text>adenosine(1518)/adenosine(1519) in 16S rRNA + 4 S-adenosyl-L-methionine = N(6)-dimethyladenosine(1518)/N(6)-dimethyladenosine(1519) in 16S rRNA + 4 S-adenosyl-L-homocysteine + 4 H(+)</text>
        <dbReference type="Rhea" id="RHEA:19609"/>
        <dbReference type="Rhea" id="RHEA-COMP:10232"/>
        <dbReference type="Rhea" id="RHEA-COMP:10233"/>
        <dbReference type="ChEBI" id="CHEBI:15378"/>
        <dbReference type="ChEBI" id="CHEBI:57856"/>
        <dbReference type="ChEBI" id="CHEBI:59789"/>
        <dbReference type="ChEBI" id="CHEBI:74411"/>
        <dbReference type="ChEBI" id="CHEBI:74493"/>
        <dbReference type="EC" id="2.1.1.182"/>
    </reaction>
</comment>
<comment type="subcellular location">
    <subcellularLocation>
        <location evidence="1">Cytoplasm</location>
    </subcellularLocation>
</comment>
<comment type="similarity">
    <text evidence="1">Belongs to the class I-like SAM-binding methyltransferase superfamily. rRNA adenine N(6)-methyltransferase family. RsmA subfamily.</text>
</comment>
<name>RSMA_METPP</name>
<evidence type="ECO:0000255" key="1">
    <source>
        <dbReference type="HAMAP-Rule" id="MF_00607"/>
    </source>
</evidence>